<dbReference type="EC" id="2.4.2.18" evidence="1"/>
<dbReference type="EMBL" id="CP000285">
    <property type="protein sequence ID" value="ABE59670.1"/>
    <property type="molecule type" value="Genomic_DNA"/>
</dbReference>
<dbReference type="RefSeq" id="WP_011507616.1">
    <property type="nucleotide sequence ID" value="NC_007963.1"/>
</dbReference>
<dbReference type="SMR" id="Q1QV38"/>
<dbReference type="STRING" id="290398.Csal_2320"/>
<dbReference type="GeneID" id="95335032"/>
<dbReference type="KEGG" id="csa:Csal_2320"/>
<dbReference type="eggNOG" id="COG0547">
    <property type="taxonomic scope" value="Bacteria"/>
</dbReference>
<dbReference type="HOGENOM" id="CLU_034315_2_1_6"/>
<dbReference type="OrthoDB" id="9806430at2"/>
<dbReference type="UniPathway" id="UPA00035">
    <property type="reaction ID" value="UER00041"/>
</dbReference>
<dbReference type="Proteomes" id="UP000000239">
    <property type="component" value="Chromosome"/>
</dbReference>
<dbReference type="GO" id="GO:0005829">
    <property type="term" value="C:cytosol"/>
    <property type="evidence" value="ECO:0007669"/>
    <property type="project" value="TreeGrafter"/>
</dbReference>
<dbReference type="GO" id="GO:0004048">
    <property type="term" value="F:anthranilate phosphoribosyltransferase activity"/>
    <property type="evidence" value="ECO:0007669"/>
    <property type="project" value="UniProtKB-UniRule"/>
</dbReference>
<dbReference type="GO" id="GO:0000287">
    <property type="term" value="F:magnesium ion binding"/>
    <property type="evidence" value="ECO:0007669"/>
    <property type="project" value="UniProtKB-UniRule"/>
</dbReference>
<dbReference type="GO" id="GO:0000162">
    <property type="term" value="P:L-tryptophan biosynthetic process"/>
    <property type="evidence" value="ECO:0007669"/>
    <property type="project" value="UniProtKB-UniRule"/>
</dbReference>
<dbReference type="FunFam" id="3.40.1030.10:FF:000002">
    <property type="entry name" value="Anthranilate phosphoribosyltransferase"/>
    <property type="match status" value="1"/>
</dbReference>
<dbReference type="Gene3D" id="3.40.1030.10">
    <property type="entry name" value="Nucleoside phosphorylase/phosphoribosyltransferase catalytic domain"/>
    <property type="match status" value="1"/>
</dbReference>
<dbReference type="Gene3D" id="1.20.970.10">
    <property type="entry name" value="Transferase, Pyrimidine Nucleoside Phosphorylase, Chain C"/>
    <property type="match status" value="1"/>
</dbReference>
<dbReference type="HAMAP" id="MF_00211">
    <property type="entry name" value="TrpD"/>
    <property type="match status" value="1"/>
</dbReference>
<dbReference type="InterPro" id="IPR005940">
    <property type="entry name" value="Anthranilate_Pribosyl_Tfrase"/>
</dbReference>
<dbReference type="InterPro" id="IPR000312">
    <property type="entry name" value="Glycosyl_Trfase_fam3"/>
</dbReference>
<dbReference type="InterPro" id="IPR017459">
    <property type="entry name" value="Glycosyl_Trfase_fam3_N_dom"/>
</dbReference>
<dbReference type="InterPro" id="IPR036320">
    <property type="entry name" value="Glycosyl_Trfase_fam3_N_dom_sf"/>
</dbReference>
<dbReference type="InterPro" id="IPR035902">
    <property type="entry name" value="Nuc_phospho_transferase"/>
</dbReference>
<dbReference type="NCBIfam" id="TIGR01245">
    <property type="entry name" value="trpD"/>
    <property type="match status" value="1"/>
</dbReference>
<dbReference type="PANTHER" id="PTHR43285">
    <property type="entry name" value="ANTHRANILATE PHOSPHORIBOSYLTRANSFERASE"/>
    <property type="match status" value="1"/>
</dbReference>
<dbReference type="PANTHER" id="PTHR43285:SF2">
    <property type="entry name" value="ANTHRANILATE PHOSPHORIBOSYLTRANSFERASE"/>
    <property type="match status" value="1"/>
</dbReference>
<dbReference type="Pfam" id="PF02885">
    <property type="entry name" value="Glycos_trans_3N"/>
    <property type="match status" value="1"/>
</dbReference>
<dbReference type="Pfam" id="PF00591">
    <property type="entry name" value="Glycos_transf_3"/>
    <property type="match status" value="1"/>
</dbReference>
<dbReference type="SUPFAM" id="SSF52418">
    <property type="entry name" value="Nucleoside phosphorylase/phosphoribosyltransferase catalytic domain"/>
    <property type="match status" value="1"/>
</dbReference>
<dbReference type="SUPFAM" id="SSF47648">
    <property type="entry name" value="Nucleoside phosphorylase/phosphoribosyltransferase N-terminal domain"/>
    <property type="match status" value="1"/>
</dbReference>
<reference key="1">
    <citation type="journal article" date="2011" name="Stand. Genomic Sci.">
        <title>Complete genome sequence of the halophilic and highly halotolerant Chromohalobacter salexigens type strain (1H11(T)).</title>
        <authorList>
            <person name="Copeland A."/>
            <person name="O'Connor K."/>
            <person name="Lucas S."/>
            <person name="Lapidus A."/>
            <person name="Berry K.W."/>
            <person name="Detter J.C."/>
            <person name="Del Rio T.G."/>
            <person name="Hammon N."/>
            <person name="Dalin E."/>
            <person name="Tice H."/>
            <person name="Pitluck S."/>
            <person name="Bruce D."/>
            <person name="Goodwin L."/>
            <person name="Han C."/>
            <person name="Tapia R."/>
            <person name="Saunders E."/>
            <person name="Schmutz J."/>
            <person name="Brettin T."/>
            <person name="Larimer F."/>
            <person name="Land M."/>
            <person name="Hauser L."/>
            <person name="Vargas C."/>
            <person name="Nieto J.J."/>
            <person name="Kyrpides N.C."/>
            <person name="Ivanova N."/>
            <person name="Goker M."/>
            <person name="Klenk H.P."/>
            <person name="Csonka L.N."/>
            <person name="Woyke T."/>
        </authorList>
    </citation>
    <scope>NUCLEOTIDE SEQUENCE [LARGE SCALE GENOMIC DNA]</scope>
    <source>
        <strain>ATCC BAA-138 / DSM 3043 / CIP 106854 / NCIMB 13768 / 1H11</strain>
    </source>
</reference>
<proteinExistence type="inferred from homology"/>
<evidence type="ECO:0000255" key="1">
    <source>
        <dbReference type="HAMAP-Rule" id="MF_00211"/>
    </source>
</evidence>
<keyword id="KW-0028">Amino-acid biosynthesis</keyword>
<keyword id="KW-0057">Aromatic amino acid biosynthesis</keyword>
<keyword id="KW-0328">Glycosyltransferase</keyword>
<keyword id="KW-0460">Magnesium</keyword>
<keyword id="KW-0479">Metal-binding</keyword>
<keyword id="KW-1185">Reference proteome</keyword>
<keyword id="KW-0808">Transferase</keyword>
<keyword id="KW-0822">Tryptophan biosynthesis</keyword>
<gene>
    <name evidence="1" type="primary">trpD</name>
    <name type="ordered locus">Csal_2320</name>
</gene>
<name>TRPD_CHRSD</name>
<sequence>MQMRDAIGAVMRHRHLSFDDTHAVMRAIMTGEASDAQIGGFLIGLAMKGETAEEITAAAQVMRELMTPVEVDRSHLVDIVGTGGDGANLFNVSTASSFVVAAAGGRVAKHGNRSVSSSSGSADLFDVAGISLELPPVEVARCITEIGVGFMFAPMHHQAMRHAIGPRREMGVRTVFNILGPLTNPAGAPNQLLGVYDPALLTIMAEALRRLGSEHVLVVNAEDGLDEISLAAPTRVAELRDGEIHEYTIAPEDFGIERQALAPLKVVTAEDSLKLVKAALVGEGPAADIVALNAGAALYAAGVADTLSEGVVLAQDSQASKLPLEKMKELADFTRILAHKDER</sequence>
<protein>
    <recommendedName>
        <fullName evidence="1">Anthranilate phosphoribosyltransferase</fullName>
        <ecNumber evidence="1">2.4.2.18</ecNumber>
    </recommendedName>
</protein>
<feature type="chain" id="PRO_1000043005" description="Anthranilate phosphoribosyltransferase">
    <location>
        <begin position="1"/>
        <end position="343"/>
    </location>
</feature>
<feature type="binding site" evidence="1">
    <location>
        <position position="81"/>
    </location>
    <ligand>
        <name>5-phospho-alpha-D-ribose 1-diphosphate</name>
        <dbReference type="ChEBI" id="CHEBI:58017"/>
    </ligand>
</feature>
<feature type="binding site" evidence="1">
    <location>
        <position position="81"/>
    </location>
    <ligand>
        <name>anthranilate</name>
        <dbReference type="ChEBI" id="CHEBI:16567"/>
        <label>1</label>
    </ligand>
</feature>
<feature type="binding site" evidence="1">
    <location>
        <begin position="84"/>
        <end position="85"/>
    </location>
    <ligand>
        <name>5-phospho-alpha-D-ribose 1-diphosphate</name>
        <dbReference type="ChEBI" id="CHEBI:58017"/>
    </ligand>
</feature>
<feature type="binding site" evidence="1">
    <location>
        <begin position="91"/>
        <end position="94"/>
    </location>
    <ligand>
        <name>5-phospho-alpha-D-ribose 1-diphosphate</name>
        <dbReference type="ChEBI" id="CHEBI:58017"/>
    </ligand>
</feature>
<feature type="binding site" evidence="1">
    <location>
        <position position="93"/>
    </location>
    <ligand>
        <name>Mg(2+)</name>
        <dbReference type="ChEBI" id="CHEBI:18420"/>
        <label>1</label>
    </ligand>
</feature>
<feature type="binding site" evidence="1">
    <location>
        <begin position="109"/>
        <end position="117"/>
    </location>
    <ligand>
        <name>5-phospho-alpha-D-ribose 1-diphosphate</name>
        <dbReference type="ChEBI" id="CHEBI:58017"/>
    </ligand>
</feature>
<feature type="binding site" evidence="1">
    <location>
        <position position="112"/>
    </location>
    <ligand>
        <name>anthranilate</name>
        <dbReference type="ChEBI" id="CHEBI:16567"/>
        <label>1</label>
    </ligand>
</feature>
<feature type="binding site" evidence="1">
    <location>
        <position position="121"/>
    </location>
    <ligand>
        <name>5-phospho-alpha-D-ribose 1-diphosphate</name>
        <dbReference type="ChEBI" id="CHEBI:58017"/>
    </ligand>
</feature>
<feature type="binding site" evidence="1">
    <location>
        <position position="167"/>
    </location>
    <ligand>
        <name>anthranilate</name>
        <dbReference type="ChEBI" id="CHEBI:16567"/>
        <label>2</label>
    </ligand>
</feature>
<feature type="binding site" evidence="1">
    <location>
        <position position="226"/>
    </location>
    <ligand>
        <name>Mg(2+)</name>
        <dbReference type="ChEBI" id="CHEBI:18420"/>
        <label>2</label>
    </ligand>
</feature>
<feature type="binding site" evidence="1">
    <location>
        <position position="227"/>
    </location>
    <ligand>
        <name>Mg(2+)</name>
        <dbReference type="ChEBI" id="CHEBI:18420"/>
        <label>1</label>
    </ligand>
</feature>
<feature type="binding site" evidence="1">
    <location>
        <position position="227"/>
    </location>
    <ligand>
        <name>Mg(2+)</name>
        <dbReference type="ChEBI" id="CHEBI:18420"/>
        <label>2</label>
    </ligand>
</feature>
<accession>Q1QV38</accession>
<comment type="function">
    <text evidence="1">Catalyzes the transfer of the phosphoribosyl group of 5-phosphorylribose-1-pyrophosphate (PRPP) to anthranilate to yield N-(5'-phosphoribosyl)-anthranilate (PRA).</text>
</comment>
<comment type="catalytic activity">
    <reaction evidence="1">
        <text>N-(5-phospho-beta-D-ribosyl)anthranilate + diphosphate = 5-phospho-alpha-D-ribose 1-diphosphate + anthranilate</text>
        <dbReference type="Rhea" id="RHEA:11768"/>
        <dbReference type="ChEBI" id="CHEBI:16567"/>
        <dbReference type="ChEBI" id="CHEBI:18277"/>
        <dbReference type="ChEBI" id="CHEBI:33019"/>
        <dbReference type="ChEBI" id="CHEBI:58017"/>
        <dbReference type="EC" id="2.4.2.18"/>
    </reaction>
</comment>
<comment type="cofactor">
    <cofactor evidence="1">
        <name>Mg(2+)</name>
        <dbReference type="ChEBI" id="CHEBI:18420"/>
    </cofactor>
    <text evidence="1">Binds 2 magnesium ions per monomer.</text>
</comment>
<comment type="pathway">
    <text evidence="1">Amino-acid biosynthesis; L-tryptophan biosynthesis; L-tryptophan from chorismate: step 2/5.</text>
</comment>
<comment type="subunit">
    <text evidence="1">Homodimer.</text>
</comment>
<comment type="similarity">
    <text evidence="1">Belongs to the anthranilate phosphoribosyltransferase family.</text>
</comment>
<organism>
    <name type="scientific">Chromohalobacter salexigens (strain ATCC BAA-138 / DSM 3043 / CIP 106854 / NCIMB 13768 / 1H11)</name>
    <dbReference type="NCBI Taxonomy" id="290398"/>
    <lineage>
        <taxon>Bacteria</taxon>
        <taxon>Pseudomonadati</taxon>
        <taxon>Pseudomonadota</taxon>
        <taxon>Gammaproteobacteria</taxon>
        <taxon>Oceanospirillales</taxon>
        <taxon>Halomonadaceae</taxon>
        <taxon>Chromohalobacter</taxon>
    </lineage>
</organism>